<proteinExistence type="inferred from homology"/>
<gene>
    <name evidence="1" type="primary">folE</name>
    <name type="ordered locus">NGR_c12570</name>
</gene>
<dbReference type="EC" id="3.5.4.16" evidence="1"/>
<dbReference type="EMBL" id="CP001389">
    <property type="protein sequence ID" value="ACP25038.1"/>
    <property type="molecule type" value="Genomic_DNA"/>
</dbReference>
<dbReference type="RefSeq" id="WP_012707815.1">
    <property type="nucleotide sequence ID" value="NC_012587.1"/>
</dbReference>
<dbReference type="RefSeq" id="YP_002825791.1">
    <property type="nucleotide sequence ID" value="NC_012587.1"/>
</dbReference>
<dbReference type="SMR" id="C3MB45"/>
<dbReference type="STRING" id="394.NGR_c12570"/>
<dbReference type="KEGG" id="rhi:NGR_c12570"/>
<dbReference type="PATRIC" id="fig|394.7.peg.4075"/>
<dbReference type="eggNOG" id="COG0302">
    <property type="taxonomic scope" value="Bacteria"/>
</dbReference>
<dbReference type="HOGENOM" id="CLU_049768_3_1_5"/>
<dbReference type="OrthoDB" id="9801207at2"/>
<dbReference type="UniPathway" id="UPA00848">
    <property type="reaction ID" value="UER00151"/>
</dbReference>
<dbReference type="Proteomes" id="UP000001054">
    <property type="component" value="Chromosome"/>
</dbReference>
<dbReference type="GO" id="GO:0005737">
    <property type="term" value="C:cytoplasm"/>
    <property type="evidence" value="ECO:0007669"/>
    <property type="project" value="TreeGrafter"/>
</dbReference>
<dbReference type="GO" id="GO:0005525">
    <property type="term" value="F:GTP binding"/>
    <property type="evidence" value="ECO:0007669"/>
    <property type="project" value="UniProtKB-KW"/>
</dbReference>
<dbReference type="GO" id="GO:0003934">
    <property type="term" value="F:GTP cyclohydrolase I activity"/>
    <property type="evidence" value="ECO:0007669"/>
    <property type="project" value="UniProtKB-UniRule"/>
</dbReference>
<dbReference type="GO" id="GO:0008270">
    <property type="term" value="F:zinc ion binding"/>
    <property type="evidence" value="ECO:0007669"/>
    <property type="project" value="UniProtKB-UniRule"/>
</dbReference>
<dbReference type="GO" id="GO:0006730">
    <property type="term" value="P:one-carbon metabolic process"/>
    <property type="evidence" value="ECO:0007669"/>
    <property type="project" value="UniProtKB-UniRule"/>
</dbReference>
<dbReference type="GO" id="GO:0006729">
    <property type="term" value="P:tetrahydrobiopterin biosynthetic process"/>
    <property type="evidence" value="ECO:0007669"/>
    <property type="project" value="TreeGrafter"/>
</dbReference>
<dbReference type="GO" id="GO:0046654">
    <property type="term" value="P:tetrahydrofolate biosynthetic process"/>
    <property type="evidence" value="ECO:0007669"/>
    <property type="project" value="UniProtKB-UniRule"/>
</dbReference>
<dbReference type="FunFam" id="1.10.286.10:FF:000001">
    <property type="entry name" value="GTP cyclohydrolase 1"/>
    <property type="match status" value="1"/>
</dbReference>
<dbReference type="FunFam" id="3.30.1130.10:FF:000001">
    <property type="entry name" value="GTP cyclohydrolase 1"/>
    <property type="match status" value="1"/>
</dbReference>
<dbReference type="Gene3D" id="1.10.286.10">
    <property type="match status" value="1"/>
</dbReference>
<dbReference type="Gene3D" id="3.30.1130.10">
    <property type="match status" value="1"/>
</dbReference>
<dbReference type="HAMAP" id="MF_00223">
    <property type="entry name" value="FolE"/>
    <property type="match status" value="1"/>
</dbReference>
<dbReference type="InterPro" id="IPR043133">
    <property type="entry name" value="GTP-CH-I_C/QueF"/>
</dbReference>
<dbReference type="InterPro" id="IPR043134">
    <property type="entry name" value="GTP-CH-I_N"/>
</dbReference>
<dbReference type="InterPro" id="IPR001474">
    <property type="entry name" value="GTP_CycHdrlase_I"/>
</dbReference>
<dbReference type="InterPro" id="IPR018234">
    <property type="entry name" value="GTP_CycHdrlase_I_CS"/>
</dbReference>
<dbReference type="InterPro" id="IPR020602">
    <property type="entry name" value="GTP_CycHdrlase_I_dom"/>
</dbReference>
<dbReference type="NCBIfam" id="TIGR00063">
    <property type="entry name" value="folE"/>
    <property type="match status" value="1"/>
</dbReference>
<dbReference type="NCBIfam" id="NF006825">
    <property type="entry name" value="PRK09347.1-2"/>
    <property type="match status" value="1"/>
</dbReference>
<dbReference type="NCBIfam" id="NF006826">
    <property type="entry name" value="PRK09347.1-3"/>
    <property type="match status" value="1"/>
</dbReference>
<dbReference type="PANTHER" id="PTHR11109:SF7">
    <property type="entry name" value="GTP CYCLOHYDROLASE 1"/>
    <property type="match status" value="1"/>
</dbReference>
<dbReference type="PANTHER" id="PTHR11109">
    <property type="entry name" value="GTP CYCLOHYDROLASE I"/>
    <property type="match status" value="1"/>
</dbReference>
<dbReference type="Pfam" id="PF01227">
    <property type="entry name" value="GTP_cyclohydroI"/>
    <property type="match status" value="1"/>
</dbReference>
<dbReference type="SUPFAM" id="SSF55620">
    <property type="entry name" value="Tetrahydrobiopterin biosynthesis enzymes-like"/>
    <property type="match status" value="1"/>
</dbReference>
<dbReference type="PROSITE" id="PS00859">
    <property type="entry name" value="GTP_CYCLOHYDROL_1_1"/>
    <property type="match status" value="1"/>
</dbReference>
<dbReference type="PROSITE" id="PS00860">
    <property type="entry name" value="GTP_CYCLOHYDROL_1_2"/>
    <property type="match status" value="1"/>
</dbReference>
<accession>C3MB45</accession>
<comment type="catalytic activity">
    <reaction evidence="1">
        <text>GTP + H2O = 7,8-dihydroneopterin 3'-triphosphate + formate + H(+)</text>
        <dbReference type="Rhea" id="RHEA:17473"/>
        <dbReference type="ChEBI" id="CHEBI:15377"/>
        <dbReference type="ChEBI" id="CHEBI:15378"/>
        <dbReference type="ChEBI" id="CHEBI:15740"/>
        <dbReference type="ChEBI" id="CHEBI:37565"/>
        <dbReference type="ChEBI" id="CHEBI:58462"/>
        <dbReference type="EC" id="3.5.4.16"/>
    </reaction>
</comment>
<comment type="pathway">
    <text evidence="1">Cofactor biosynthesis; 7,8-dihydroneopterin triphosphate biosynthesis; 7,8-dihydroneopterin triphosphate from GTP: step 1/1.</text>
</comment>
<comment type="subunit">
    <text evidence="1">Homomer.</text>
</comment>
<comment type="similarity">
    <text evidence="1">Belongs to the GTP cyclohydrolase I family.</text>
</comment>
<sequence>MDAIVKNFPLLDDTSGRPTQKEAEEAVRVLLRWAGEDPTREGLKDTPARVIKSYREIFGGYDLVAEDVLGRTFEEVSGYDDIVLEKDVPFYSHCEHHMVPIIGKAHVAYLPNGRVLGLSKIARVVDIYARRLQTQEAMTAQIARAIDETLAPRGVAVMIEAEHLCMAMRGIKKHGSTTLTTTFTGAFKTEPAEQARFMTLLRGFK</sequence>
<keyword id="KW-0342">GTP-binding</keyword>
<keyword id="KW-0378">Hydrolase</keyword>
<keyword id="KW-0479">Metal-binding</keyword>
<keyword id="KW-0547">Nucleotide-binding</keyword>
<keyword id="KW-0554">One-carbon metabolism</keyword>
<keyword id="KW-1185">Reference proteome</keyword>
<keyword id="KW-0862">Zinc</keyword>
<evidence type="ECO:0000255" key="1">
    <source>
        <dbReference type="HAMAP-Rule" id="MF_00223"/>
    </source>
</evidence>
<protein>
    <recommendedName>
        <fullName evidence="1">GTP cyclohydrolase 1</fullName>
        <ecNumber evidence="1">3.5.4.16</ecNumber>
    </recommendedName>
    <alternativeName>
        <fullName evidence="1">GTP cyclohydrolase I</fullName>
        <shortName evidence="1">GTP-CH-I</shortName>
    </alternativeName>
</protein>
<feature type="chain" id="PRO_1000124925" description="GTP cyclohydrolase 1">
    <location>
        <begin position="1"/>
        <end position="205"/>
    </location>
</feature>
<feature type="binding site" evidence="1">
    <location>
        <position position="94"/>
    </location>
    <ligand>
        <name>Zn(2+)</name>
        <dbReference type="ChEBI" id="CHEBI:29105"/>
    </ligand>
</feature>
<feature type="binding site" evidence="1">
    <location>
        <position position="97"/>
    </location>
    <ligand>
        <name>Zn(2+)</name>
        <dbReference type="ChEBI" id="CHEBI:29105"/>
    </ligand>
</feature>
<feature type="binding site" evidence="1">
    <location>
        <position position="165"/>
    </location>
    <ligand>
        <name>Zn(2+)</name>
        <dbReference type="ChEBI" id="CHEBI:29105"/>
    </ligand>
</feature>
<reference key="1">
    <citation type="journal article" date="2009" name="Appl. Environ. Microbiol.">
        <title>Rhizobium sp. strain NGR234 possesses a remarkable number of secretion systems.</title>
        <authorList>
            <person name="Schmeisser C."/>
            <person name="Liesegang H."/>
            <person name="Krysciak D."/>
            <person name="Bakkou N."/>
            <person name="Le Quere A."/>
            <person name="Wollherr A."/>
            <person name="Heinemeyer I."/>
            <person name="Morgenstern B."/>
            <person name="Pommerening-Roeser A."/>
            <person name="Flores M."/>
            <person name="Palacios R."/>
            <person name="Brenner S."/>
            <person name="Gottschalk G."/>
            <person name="Schmitz R.A."/>
            <person name="Broughton W.J."/>
            <person name="Perret X."/>
            <person name="Strittmatter A.W."/>
            <person name="Streit W.R."/>
        </authorList>
    </citation>
    <scope>NUCLEOTIDE SEQUENCE [LARGE SCALE GENOMIC DNA]</scope>
    <source>
        <strain>NBRC 101917 / NGR234</strain>
    </source>
</reference>
<name>GCH1_SINFN</name>
<organism>
    <name type="scientific">Sinorhizobium fredii (strain NBRC 101917 / NGR234)</name>
    <dbReference type="NCBI Taxonomy" id="394"/>
    <lineage>
        <taxon>Bacteria</taxon>
        <taxon>Pseudomonadati</taxon>
        <taxon>Pseudomonadota</taxon>
        <taxon>Alphaproteobacteria</taxon>
        <taxon>Hyphomicrobiales</taxon>
        <taxon>Rhizobiaceae</taxon>
        <taxon>Sinorhizobium/Ensifer group</taxon>
        <taxon>Sinorhizobium</taxon>
    </lineage>
</organism>